<dbReference type="EMBL" id="CP000151">
    <property type="protein sequence ID" value="ABB09809.1"/>
    <property type="molecule type" value="Genomic_DNA"/>
</dbReference>
<dbReference type="RefSeq" id="WP_011353316.1">
    <property type="nucleotide sequence ID" value="NZ_WNDV01000010.1"/>
</dbReference>
<dbReference type="SMR" id="Q39CK7"/>
<dbReference type="KEGG" id="bur:Bcep18194_A6215"/>
<dbReference type="PATRIC" id="fig|482957.22.peg.3227"/>
<dbReference type="HOGENOM" id="CLU_019375_7_0_4"/>
<dbReference type="Proteomes" id="UP000002705">
    <property type="component" value="Chromosome 1"/>
</dbReference>
<dbReference type="GO" id="GO:0005886">
    <property type="term" value="C:plasma membrane"/>
    <property type="evidence" value="ECO:0007669"/>
    <property type="project" value="UniProtKB-SubCell"/>
</dbReference>
<dbReference type="GO" id="GO:0015138">
    <property type="term" value="F:fumarate transmembrane transporter activity"/>
    <property type="evidence" value="ECO:0007669"/>
    <property type="project" value="TreeGrafter"/>
</dbReference>
<dbReference type="GO" id="GO:0015366">
    <property type="term" value="F:malate:proton symporter activity"/>
    <property type="evidence" value="ECO:0007669"/>
    <property type="project" value="TreeGrafter"/>
</dbReference>
<dbReference type="GO" id="GO:0015141">
    <property type="term" value="F:succinate transmembrane transporter activity"/>
    <property type="evidence" value="ECO:0007669"/>
    <property type="project" value="TreeGrafter"/>
</dbReference>
<dbReference type="GO" id="GO:0070778">
    <property type="term" value="P:L-aspartate transmembrane transport"/>
    <property type="evidence" value="ECO:0007669"/>
    <property type="project" value="TreeGrafter"/>
</dbReference>
<dbReference type="FunFam" id="1.10.3860.10:FF:000001">
    <property type="entry name" value="C4-dicarboxylate transport protein"/>
    <property type="match status" value="1"/>
</dbReference>
<dbReference type="Gene3D" id="1.10.3860.10">
    <property type="entry name" value="Sodium:dicarboxylate symporter"/>
    <property type="match status" value="1"/>
</dbReference>
<dbReference type="HAMAP" id="MF_01300">
    <property type="entry name" value="C4_dicarb_transport"/>
    <property type="match status" value="1"/>
</dbReference>
<dbReference type="InterPro" id="IPR023954">
    <property type="entry name" value="C4_dicarb_transport"/>
</dbReference>
<dbReference type="InterPro" id="IPR001991">
    <property type="entry name" value="Na-dicarboxylate_symporter"/>
</dbReference>
<dbReference type="InterPro" id="IPR018107">
    <property type="entry name" value="Na-dicarboxylate_symporter_CS"/>
</dbReference>
<dbReference type="InterPro" id="IPR036458">
    <property type="entry name" value="Na:dicarbo_symporter_sf"/>
</dbReference>
<dbReference type="NCBIfam" id="NF002461">
    <property type="entry name" value="PRK01663.1"/>
    <property type="match status" value="1"/>
</dbReference>
<dbReference type="NCBIfam" id="NF009587">
    <property type="entry name" value="PRK13027.1"/>
    <property type="match status" value="1"/>
</dbReference>
<dbReference type="PANTHER" id="PTHR42865:SF1">
    <property type="entry name" value="AEROBIC C4-DICARBOXYLATE TRANSPORT PROTEIN"/>
    <property type="match status" value="1"/>
</dbReference>
<dbReference type="PANTHER" id="PTHR42865">
    <property type="entry name" value="PROTON/GLUTAMATE-ASPARTATE SYMPORTER"/>
    <property type="match status" value="1"/>
</dbReference>
<dbReference type="Pfam" id="PF00375">
    <property type="entry name" value="SDF"/>
    <property type="match status" value="1"/>
</dbReference>
<dbReference type="PRINTS" id="PR00173">
    <property type="entry name" value="EDTRNSPORT"/>
</dbReference>
<dbReference type="SUPFAM" id="SSF118215">
    <property type="entry name" value="Proton glutamate symport protein"/>
    <property type="match status" value="1"/>
</dbReference>
<dbReference type="PROSITE" id="PS00713">
    <property type="entry name" value="NA_DICARBOXYL_SYMP_1"/>
    <property type="match status" value="1"/>
</dbReference>
<dbReference type="PROSITE" id="PS00714">
    <property type="entry name" value="NA_DICARBOXYL_SYMP_2"/>
    <property type="match status" value="1"/>
</dbReference>
<accession>Q39CK7</accession>
<feature type="chain" id="PRO_0000321979" description="C4-dicarboxylate transport protein">
    <location>
        <begin position="1"/>
        <end position="429"/>
    </location>
</feature>
<feature type="transmembrane region" description="Helical" evidence="1">
    <location>
        <begin position="9"/>
        <end position="29"/>
    </location>
</feature>
<feature type="transmembrane region" description="Helical" evidence="1">
    <location>
        <begin position="45"/>
        <end position="65"/>
    </location>
</feature>
<feature type="transmembrane region" description="Helical" evidence="1">
    <location>
        <begin position="79"/>
        <end position="99"/>
    </location>
</feature>
<feature type="transmembrane region" description="Helical" evidence="1">
    <location>
        <begin position="149"/>
        <end position="169"/>
    </location>
</feature>
<feature type="transmembrane region" description="Helical" evidence="1">
    <location>
        <begin position="185"/>
        <end position="205"/>
    </location>
</feature>
<feature type="transmembrane region" description="Helical" evidence="1">
    <location>
        <begin position="223"/>
        <end position="243"/>
    </location>
</feature>
<feature type="transmembrane region" description="Helical" evidence="1">
    <location>
        <begin position="308"/>
        <end position="328"/>
    </location>
</feature>
<feature type="transmembrane region" description="Helical" evidence="1">
    <location>
        <begin position="356"/>
        <end position="376"/>
    </location>
</feature>
<reference key="1">
    <citation type="submission" date="2005-10" db="EMBL/GenBank/DDBJ databases">
        <title>Complete sequence of chromosome 1 of Burkholderia sp. 383.</title>
        <authorList>
            <consortium name="US DOE Joint Genome Institute"/>
            <person name="Copeland A."/>
            <person name="Lucas S."/>
            <person name="Lapidus A."/>
            <person name="Barry K."/>
            <person name="Detter J.C."/>
            <person name="Glavina T."/>
            <person name="Hammon N."/>
            <person name="Israni S."/>
            <person name="Pitluck S."/>
            <person name="Chain P."/>
            <person name="Malfatti S."/>
            <person name="Shin M."/>
            <person name="Vergez L."/>
            <person name="Schmutz J."/>
            <person name="Larimer F."/>
            <person name="Land M."/>
            <person name="Kyrpides N."/>
            <person name="Lykidis A."/>
            <person name="Richardson P."/>
        </authorList>
    </citation>
    <scope>NUCLEOTIDE SEQUENCE [LARGE SCALE GENOMIC DNA]</scope>
    <source>
        <strain>ATCC 17760 / DSM 23089 / LMG 22485 / NCIMB 9086 / R18194 / 383</strain>
    </source>
</reference>
<keyword id="KW-0997">Cell inner membrane</keyword>
<keyword id="KW-1003">Cell membrane</keyword>
<keyword id="KW-0472">Membrane</keyword>
<keyword id="KW-0769">Symport</keyword>
<keyword id="KW-0812">Transmembrane</keyword>
<keyword id="KW-1133">Transmembrane helix</keyword>
<keyword id="KW-0813">Transport</keyword>
<organism>
    <name type="scientific">Burkholderia lata (strain ATCC 17760 / DSM 23089 / LMG 22485 / NCIMB 9086 / R18194 / 383)</name>
    <dbReference type="NCBI Taxonomy" id="482957"/>
    <lineage>
        <taxon>Bacteria</taxon>
        <taxon>Pseudomonadati</taxon>
        <taxon>Pseudomonadota</taxon>
        <taxon>Betaproteobacteria</taxon>
        <taxon>Burkholderiales</taxon>
        <taxon>Burkholderiaceae</taxon>
        <taxon>Burkholderia</taxon>
        <taxon>Burkholderia cepacia complex</taxon>
    </lineage>
</organism>
<name>DCTA_BURL3</name>
<sequence>MKKKPFYKVLYVQVIFAIIVGVILGHYYPALATDMKPLGDGFIKLIKMVIGPIIFCTVVTGIAGMEDMKKVGRVGGKALLYFEIVSTFALLLGLAATHILRPGVGFNIDPATLDGKAVASYAAKAHGQSTVDFLMHIIPNTMVDAFAQGEILQILLIALLFGSVLAHLGERGKVVTDFIDGLTRVLFGIVHIVTKLAPIGAFGAMAFTIGKYGVGSLVPLLKLIGTFYLTSVVFVLVVLGTIARFTGFSIIRFVSYIKEELLIVLGTSSSEAALPQLMEKLEKAGCSRSVVGLVVPTGYSFNLDGTNIYMTMAVLFIAQATNIELTWMQQLTLLAVAMLTSKGASGVTGAGFITLAATLAVVPTIPLSGMVLILGIDRFMSECRALTNIVGNGVATVVVSAWEKELDRNKLRQALTGGGEVTTTETAGV</sequence>
<protein>
    <recommendedName>
        <fullName evidence="1">C4-dicarboxylate transport protein</fullName>
    </recommendedName>
</protein>
<gene>
    <name evidence="1" type="primary">dctA</name>
    <name type="ordered locus">Bcep18194_A6215</name>
</gene>
<comment type="function">
    <text evidence="1">Responsible for the transport of dicarboxylates such as succinate, fumarate, and malate from the periplasm across the membrane.</text>
</comment>
<comment type="subcellular location">
    <subcellularLocation>
        <location evidence="1">Cell inner membrane</location>
        <topology evidence="1">Multi-pass membrane protein</topology>
    </subcellularLocation>
</comment>
<comment type="similarity">
    <text evidence="1">Belongs to the dicarboxylate/amino acid:cation symporter (DAACS) (TC 2.A.23) family.</text>
</comment>
<proteinExistence type="inferred from homology"/>
<evidence type="ECO:0000255" key="1">
    <source>
        <dbReference type="HAMAP-Rule" id="MF_01300"/>
    </source>
</evidence>